<accession>Q68D91</accession>
<accession>D6RJI1</accession>
<accession>Q8IY16</accession>
<accession>Q8N8D8</accession>
<proteinExistence type="evidence at protein level"/>
<dbReference type="EC" id="3.1.2.2" evidence="5"/>
<dbReference type="EC" id="3.5.2.6" evidence="4"/>
<dbReference type="EMBL" id="AK096942">
    <property type="protein sequence ID" value="BAC04908.1"/>
    <property type="molecule type" value="mRNA"/>
</dbReference>
<dbReference type="EMBL" id="AK289778">
    <property type="protein sequence ID" value="BAF82467.1"/>
    <property type="molecule type" value="mRNA"/>
</dbReference>
<dbReference type="EMBL" id="AC093510">
    <property type="status" value="NOT_ANNOTATED_CDS"/>
    <property type="molecule type" value="Genomic_DNA"/>
</dbReference>
<dbReference type="EMBL" id="CH471084">
    <property type="protein sequence ID" value="EAW95979.1"/>
    <property type="molecule type" value="Genomic_DNA"/>
</dbReference>
<dbReference type="EMBL" id="BC038230">
    <property type="protein sequence ID" value="AAH38230.1"/>
    <property type="molecule type" value="mRNA"/>
</dbReference>
<dbReference type="EMBL" id="CR749512">
    <property type="protein sequence ID" value="CAH18329.1"/>
    <property type="molecule type" value="mRNA"/>
</dbReference>
<dbReference type="CCDS" id="CCDS4067.1">
    <molecule id="Q68D91-1"/>
</dbReference>
<dbReference type="RefSeq" id="NP_981951.2">
    <molecule id="Q68D91-1"/>
    <property type="nucleotide sequence ID" value="NM_203406.2"/>
</dbReference>
<dbReference type="SMR" id="Q68D91"/>
<dbReference type="BioGRID" id="127492">
    <property type="interactions" value="73"/>
</dbReference>
<dbReference type="FunCoup" id="Q68D91">
    <property type="interactions" value="716"/>
</dbReference>
<dbReference type="IntAct" id="Q68D91">
    <property type="interactions" value="54"/>
</dbReference>
<dbReference type="MINT" id="Q68D91"/>
<dbReference type="STRING" id="9606.ENSP00000314776"/>
<dbReference type="iPTMnet" id="Q68D91"/>
<dbReference type="PhosphoSitePlus" id="Q68D91"/>
<dbReference type="SwissPalm" id="Q68D91"/>
<dbReference type="BioMuta" id="MBLAC2"/>
<dbReference type="DMDM" id="311033427"/>
<dbReference type="jPOST" id="Q68D91"/>
<dbReference type="MassIVE" id="Q68D91"/>
<dbReference type="PaxDb" id="9606-ENSP00000314776"/>
<dbReference type="PeptideAtlas" id="Q68D91"/>
<dbReference type="ProteomicsDB" id="66062">
    <molecule id="Q68D91-1"/>
</dbReference>
<dbReference type="ProteomicsDB" id="66063">
    <molecule id="Q68D91-2"/>
</dbReference>
<dbReference type="Pumba" id="Q68D91"/>
<dbReference type="Antibodypedia" id="50739">
    <property type="antibodies" value="14 antibodies from 7 providers"/>
</dbReference>
<dbReference type="DNASU" id="153364"/>
<dbReference type="Ensembl" id="ENST00000316610.7">
    <molecule id="Q68D91-1"/>
    <property type="protein sequence ID" value="ENSP00000314776.6"/>
    <property type="gene ID" value="ENSG00000176055.10"/>
</dbReference>
<dbReference type="Ensembl" id="ENST00000514906.1">
    <molecule id="Q68D91-2"/>
    <property type="protein sequence ID" value="ENSP00000425600.1"/>
    <property type="gene ID" value="ENSG00000176055.10"/>
</dbReference>
<dbReference type="GeneID" id="153364"/>
<dbReference type="KEGG" id="hsa:153364"/>
<dbReference type="MANE-Select" id="ENST00000316610.7">
    <property type="protein sequence ID" value="ENSP00000314776.6"/>
    <property type="RefSeq nucleotide sequence ID" value="NM_203406.2"/>
    <property type="RefSeq protein sequence ID" value="NP_981951.2"/>
</dbReference>
<dbReference type="UCSC" id="uc003kjp.3">
    <molecule id="Q68D91-1"/>
    <property type="organism name" value="human"/>
</dbReference>
<dbReference type="AGR" id="HGNC:33711"/>
<dbReference type="CTD" id="153364"/>
<dbReference type="DisGeNET" id="153364"/>
<dbReference type="GeneCards" id="MBLAC2"/>
<dbReference type="HGNC" id="HGNC:33711">
    <property type="gene designation" value="MBLAC2"/>
</dbReference>
<dbReference type="HPA" id="ENSG00000176055">
    <property type="expression patterns" value="Low tissue specificity"/>
</dbReference>
<dbReference type="MIM" id="620907">
    <property type="type" value="gene"/>
</dbReference>
<dbReference type="neXtProt" id="NX_Q68D91"/>
<dbReference type="OpenTargets" id="ENSG00000176055"/>
<dbReference type="PharmGKB" id="PA164722236"/>
<dbReference type="VEuPathDB" id="HostDB:ENSG00000176055"/>
<dbReference type="eggNOG" id="KOG0813">
    <property type="taxonomic scope" value="Eukaryota"/>
</dbReference>
<dbReference type="GeneTree" id="ENSGT00390000017819"/>
<dbReference type="HOGENOM" id="CLU_030571_0_2_1"/>
<dbReference type="InParanoid" id="Q68D91"/>
<dbReference type="OMA" id="VASHTHF"/>
<dbReference type="OrthoDB" id="17458at2759"/>
<dbReference type="PAN-GO" id="Q68D91">
    <property type="GO annotations" value="0 GO annotations based on evolutionary models"/>
</dbReference>
<dbReference type="PhylomeDB" id="Q68D91"/>
<dbReference type="TreeFam" id="TF319889"/>
<dbReference type="PathwayCommons" id="Q68D91"/>
<dbReference type="SignaLink" id="Q68D91"/>
<dbReference type="BioGRID-ORCS" id="153364">
    <property type="hits" value="6 hits in 1147 CRISPR screens"/>
</dbReference>
<dbReference type="ChiTaRS" id="MBLAC2">
    <property type="organism name" value="human"/>
</dbReference>
<dbReference type="GenomeRNAi" id="153364"/>
<dbReference type="Pharos" id="Q68D91">
    <property type="development level" value="Tdark"/>
</dbReference>
<dbReference type="PRO" id="PR:Q68D91"/>
<dbReference type="Proteomes" id="UP000005640">
    <property type="component" value="Chromosome 5"/>
</dbReference>
<dbReference type="RNAct" id="Q68D91">
    <property type="molecule type" value="protein"/>
</dbReference>
<dbReference type="Bgee" id="ENSG00000176055">
    <property type="expression patterns" value="Expressed in endothelial cell and 171 other cell types or tissues"/>
</dbReference>
<dbReference type="GO" id="GO:0005789">
    <property type="term" value="C:endoplasmic reticulum membrane"/>
    <property type="evidence" value="ECO:0000314"/>
    <property type="project" value="UniProtKB"/>
</dbReference>
<dbReference type="GO" id="GO:0070062">
    <property type="term" value="C:extracellular exosome"/>
    <property type="evidence" value="ECO:0007005"/>
    <property type="project" value="UniProtKB"/>
</dbReference>
<dbReference type="GO" id="GO:0005739">
    <property type="term" value="C:mitochondrion"/>
    <property type="evidence" value="ECO:0006056"/>
    <property type="project" value="FlyBase"/>
</dbReference>
<dbReference type="GO" id="GO:0005886">
    <property type="term" value="C:plasma membrane"/>
    <property type="evidence" value="ECO:0000314"/>
    <property type="project" value="UniProtKB"/>
</dbReference>
<dbReference type="GO" id="GO:0008800">
    <property type="term" value="F:beta-lactamase activity"/>
    <property type="evidence" value="ECO:0000314"/>
    <property type="project" value="UniProtKB"/>
</dbReference>
<dbReference type="GO" id="GO:0052816">
    <property type="term" value="F:long-chain fatty acyl-CoA hydrolase activity"/>
    <property type="evidence" value="ECO:0000315"/>
    <property type="project" value="UniProtKB"/>
</dbReference>
<dbReference type="GO" id="GO:0046872">
    <property type="term" value="F:metal ion binding"/>
    <property type="evidence" value="ECO:0007669"/>
    <property type="project" value="UniProtKB-KW"/>
</dbReference>
<dbReference type="GO" id="GO:0006631">
    <property type="term" value="P:fatty acid metabolic process"/>
    <property type="evidence" value="ECO:0007669"/>
    <property type="project" value="UniProtKB-KW"/>
</dbReference>
<dbReference type="CDD" id="cd07712">
    <property type="entry name" value="MBLAC2-like_MBL-fold"/>
    <property type="match status" value="1"/>
</dbReference>
<dbReference type="FunFam" id="3.60.15.10:FF:000026">
    <property type="entry name" value="metallo-beta-lactamase domain-containing protein 2"/>
    <property type="match status" value="1"/>
</dbReference>
<dbReference type="Gene3D" id="3.60.15.10">
    <property type="entry name" value="Ribonuclease Z/Hydroxyacylglutathione hydrolase-like"/>
    <property type="match status" value="1"/>
</dbReference>
<dbReference type="InterPro" id="IPR001279">
    <property type="entry name" value="Metallo-B-lactamas"/>
</dbReference>
<dbReference type="InterPro" id="IPR050855">
    <property type="entry name" value="NDM-1-like"/>
</dbReference>
<dbReference type="InterPro" id="IPR036866">
    <property type="entry name" value="RibonucZ/Hydroxyglut_hydro"/>
</dbReference>
<dbReference type="PANTHER" id="PTHR42951:SF4">
    <property type="entry name" value="ACYL-COENZYME A THIOESTERASE MBLAC2"/>
    <property type="match status" value="1"/>
</dbReference>
<dbReference type="PANTHER" id="PTHR42951">
    <property type="entry name" value="METALLO-BETA-LACTAMASE DOMAIN-CONTAINING"/>
    <property type="match status" value="1"/>
</dbReference>
<dbReference type="Pfam" id="PF00753">
    <property type="entry name" value="Lactamase_B"/>
    <property type="match status" value="1"/>
</dbReference>
<dbReference type="SMART" id="SM00849">
    <property type="entry name" value="Lactamase_B"/>
    <property type="match status" value="1"/>
</dbReference>
<dbReference type="SUPFAM" id="SSF56281">
    <property type="entry name" value="Metallo-hydrolase/oxidoreductase"/>
    <property type="match status" value="1"/>
</dbReference>
<sequence>MSALEWYAHKSLGDGIFWIQERFYESGNRANIWLVRGSEQDVVIDTGLGLRSLPEYLYSSGLLQDREAKEDAARRPLLAVATHVHFDHSGGLYQFDRVAVHHAEAEALARGDNFETVTWLSDSEVVRTPSPGWRARQFRVQAVQPTLILQDGDVINLGDRQLTVMHMPGHSRGSICLHDKDRKILFSGDVVYDGSLIDWLPYSRISDYVGTCERLIELVDRGLVEKVLPGHFNTFGAERLFRLASNYISKAGICHKVSTFAMRSLASLALRVTNSRTSP</sequence>
<feature type="initiator methionine" description="Removed" evidence="10">
    <location>
        <position position="1"/>
    </location>
</feature>
<feature type="chain" id="PRO_0000325935" description="Acyl-coenzyme A thioesterase MBLAC2">
    <location>
        <begin position="2"/>
        <end position="279"/>
    </location>
</feature>
<feature type="binding site" evidence="1">
    <location>
        <position position="83"/>
    </location>
    <ligand>
        <name>Zn(2+)</name>
        <dbReference type="ChEBI" id="CHEBI:29105"/>
        <label>1</label>
    </ligand>
</feature>
<feature type="binding site" evidence="1">
    <location>
        <position position="85"/>
    </location>
    <ligand>
        <name>Zn(2+)</name>
        <dbReference type="ChEBI" id="CHEBI:29105"/>
        <label>1</label>
    </ligand>
</feature>
<feature type="binding site" evidence="9">
    <location>
        <position position="87"/>
    </location>
    <ligand>
        <name>Zn(2+)</name>
        <dbReference type="ChEBI" id="CHEBI:29105"/>
        <label>2</label>
    </ligand>
</feature>
<feature type="binding site" evidence="9">
    <location>
        <position position="88"/>
    </location>
    <ligand>
        <name>Zn(2+)</name>
        <dbReference type="ChEBI" id="CHEBI:29105"/>
        <label>2</label>
    </ligand>
</feature>
<feature type="binding site" evidence="1">
    <location>
        <position position="170"/>
    </location>
    <ligand>
        <name>Zn(2+)</name>
        <dbReference type="ChEBI" id="CHEBI:29105"/>
        <label>1</label>
    </ligand>
</feature>
<feature type="binding site" evidence="1">
    <location>
        <position position="189"/>
    </location>
    <ligand>
        <name>Zn(2+)</name>
        <dbReference type="ChEBI" id="CHEBI:29105"/>
        <label>1</label>
    </ligand>
</feature>
<feature type="binding site" evidence="1">
    <location>
        <position position="189"/>
    </location>
    <ligand>
        <name>Zn(2+)</name>
        <dbReference type="ChEBI" id="CHEBI:29105"/>
        <label>2</label>
    </ligand>
</feature>
<feature type="binding site" evidence="1">
    <location>
        <position position="231"/>
    </location>
    <ligand>
        <name>Zn(2+)</name>
        <dbReference type="ChEBI" id="CHEBI:29105"/>
        <label>2</label>
    </ligand>
</feature>
<feature type="modified residue" description="N-acetylserine" evidence="10">
    <location>
        <position position="2"/>
    </location>
</feature>
<feature type="lipid moiety-binding region" description="S-palmitoyl cysteine" evidence="5">
    <location>
        <position position="254"/>
    </location>
</feature>
<feature type="splice variant" id="VSP_032490" description="In isoform 2." evidence="7">
    <original>DVINLGDRQLTVMHMPGHSRGSICLHDKDRKILFSGDVVYDGSLIDWLPYSRISDYVGTCERLIELVDRGLVEKVLPGHFNTFGAERLFRLASNYISKAGICHKVSTFAMRSLASLALRVTNSRTSP</original>
    <variation>NGPPRARALVKGGYWEETVRVPHVADLRGHKGDYFGTSQSHFCFTLP</variation>
    <location>
        <begin position="153"/>
        <end position="279"/>
    </location>
</feature>
<feature type="sequence variant" id="VAR_039956" description="In dbSNP:rs2162986." evidence="2 3 6">
    <original>T</original>
    <variation>A</variation>
    <location>
        <position position="128"/>
    </location>
</feature>
<feature type="mutagenesis site" description="Loss of enzyme activity." evidence="5">
    <original>D</original>
    <variation>A</variation>
    <location>
        <position position="87"/>
    </location>
</feature>
<feature type="mutagenesis site" description="Loss of enzyme activity." evidence="5">
    <original>H</original>
    <variation>A</variation>
    <location>
        <position position="88"/>
    </location>
</feature>
<feature type="mutagenesis site" description="No effect on enzyme activity." evidence="5">
    <original>S</original>
    <variation>A</variation>
    <location>
        <position position="89"/>
    </location>
</feature>
<feature type="mutagenesis site" description="No effect on enzyme activity." evidence="5">
    <original>Y</original>
    <variation>A</variation>
    <location>
        <position position="93"/>
    </location>
</feature>
<feature type="mutagenesis site" description="No effect on ZDHH20-catalyzed palmitoylation." evidence="5">
    <original>C</original>
    <variation>A</variation>
    <location>
        <position position="176"/>
    </location>
</feature>
<feature type="mutagenesis site" description="No effect on ZDHH20-catalyzed palmitoylation." evidence="5">
    <original>C</original>
    <variation>A</variation>
    <location>
        <position position="212"/>
    </location>
</feature>
<feature type="mutagenesis site" description="Loss of ZDHH20-catalyzed palmitoylation. Shows only a slight reduction in the Vmax and a small increase in the Km towards palmitoyl-CoA in comparison with wild-type." evidence="5">
    <original>C</original>
    <variation>A</variation>
    <location>
        <position position="254"/>
    </location>
</feature>
<feature type="sequence conflict" description="In Ref. 1; BAC04908." evidence="8" ref="1">
    <original>E</original>
    <variation>G</variation>
    <location>
        <position position="25"/>
    </location>
</feature>
<reference key="1">
    <citation type="journal article" date="2004" name="Nat. Genet.">
        <title>Complete sequencing and characterization of 21,243 full-length human cDNAs.</title>
        <authorList>
            <person name="Ota T."/>
            <person name="Suzuki Y."/>
            <person name="Nishikawa T."/>
            <person name="Otsuki T."/>
            <person name="Sugiyama T."/>
            <person name="Irie R."/>
            <person name="Wakamatsu A."/>
            <person name="Hayashi K."/>
            <person name="Sato H."/>
            <person name="Nagai K."/>
            <person name="Kimura K."/>
            <person name="Makita H."/>
            <person name="Sekine M."/>
            <person name="Obayashi M."/>
            <person name="Nishi T."/>
            <person name="Shibahara T."/>
            <person name="Tanaka T."/>
            <person name="Ishii S."/>
            <person name="Yamamoto J."/>
            <person name="Saito K."/>
            <person name="Kawai Y."/>
            <person name="Isono Y."/>
            <person name="Nakamura Y."/>
            <person name="Nagahari K."/>
            <person name="Murakami K."/>
            <person name="Yasuda T."/>
            <person name="Iwayanagi T."/>
            <person name="Wagatsuma M."/>
            <person name="Shiratori A."/>
            <person name="Sudo H."/>
            <person name="Hosoiri T."/>
            <person name="Kaku Y."/>
            <person name="Kodaira H."/>
            <person name="Kondo H."/>
            <person name="Sugawara M."/>
            <person name="Takahashi M."/>
            <person name="Kanda K."/>
            <person name="Yokoi T."/>
            <person name="Furuya T."/>
            <person name="Kikkawa E."/>
            <person name="Omura Y."/>
            <person name="Abe K."/>
            <person name="Kamihara K."/>
            <person name="Katsuta N."/>
            <person name="Sato K."/>
            <person name="Tanikawa M."/>
            <person name="Yamazaki M."/>
            <person name="Ninomiya K."/>
            <person name="Ishibashi T."/>
            <person name="Yamashita H."/>
            <person name="Murakawa K."/>
            <person name="Fujimori K."/>
            <person name="Tanai H."/>
            <person name="Kimata M."/>
            <person name="Watanabe M."/>
            <person name="Hiraoka S."/>
            <person name="Chiba Y."/>
            <person name="Ishida S."/>
            <person name="Ono Y."/>
            <person name="Takiguchi S."/>
            <person name="Watanabe S."/>
            <person name="Yosida M."/>
            <person name="Hotuta T."/>
            <person name="Kusano J."/>
            <person name="Kanehori K."/>
            <person name="Takahashi-Fujii A."/>
            <person name="Hara H."/>
            <person name="Tanase T.-O."/>
            <person name="Nomura Y."/>
            <person name="Togiya S."/>
            <person name="Komai F."/>
            <person name="Hara R."/>
            <person name="Takeuchi K."/>
            <person name="Arita M."/>
            <person name="Imose N."/>
            <person name="Musashino K."/>
            <person name="Yuuki H."/>
            <person name="Oshima A."/>
            <person name="Sasaki N."/>
            <person name="Aotsuka S."/>
            <person name="Yoshikawa Y."/>
            <person name="Matsunawa H."/>
            <person name="Ichihara T."/>
            <person name="Shiohata N."/>
            <person name="Sano S."/>
            <person name="Moriya S."/>
            <person name="Momiyama H."/>
            <person name="Satoh N."/>
            <person name="Takami S."/>
            <person name="Terashima Y."/>
            <person name="Suzuki O."/>
            <person name="Nakagawa S."/>
            <person name="Senoh A."/>
            <person name="Mizoguchi H."/>
            <person name="Goto Y."/>
            <person name="Shimizu F."/>
            <person name="Wakebe H."/>
            <person name="Hishigaki H."/>
            <person name="Watanabe T."/>
            <person name="Sugiyama A."/>
            <person name="Takemoto M."/>
            <person name="Kawakami B."/>
            <person name="Yamazaki M."/>
            <person name="Watanabe K."/>
            <person name="Kumagai A."/>
            <person name="Itakura S."/>
            <person name="Fukuzumi Y."/>
            <person name="Fujimori Y."/>
            <person name="Komiyama M."/>
            <person name="Tashiro H."/>
            <person name="Tanigami A."/>
            <person name="Fujiwara T."/>
            <person name="Ono T."/>
            <person name="Yamada K."/>
            <person name="Fujii Y."/>
            <person name="Ozaki K."/>
            <person name="Hirao M."/>
            <person name="Ohmori Y."/>
            <person name="Kawabata A."/>
            <person name="Hikiji T."/>
            <person name="Kobatake N."/>
            <person name="Inagaki H."/>
            <person name="Ikema Y."/>
            <person name="Okamoto S."/>
            <person name="Okitani R."/>
            <person name="Kawakami T."/>
            <person name="Noguchi S."/>
            <person name="Itoh T."/>
            <person name="Shigeta K."/>
            <person name="Senba T."/>
            <person name="Matsumura K."/>
            <person name="Nakajima Y."/>
            <person name="Mizuno T."/>
            <person name="Morinaga M."/>
            <person name="Sasaki M."/>
            <person name="Togashi T."/>
            <person name="Oyama M."/>
            <person name="Hata H."/>
            <person name="Watanabe M."/>
            <person name="Komatsu T."/>
            <person name="Mizushima-Sugano J."/>
            <person name="Satoh T."/>
            <person name="Shirai Y."/>
            <person name="Takahashi Y."/>
            <person name="Nakagawa K."/>
            <person name="Okumura K."/>
            <person name="Nagase T."/>
            <person name="Nomura N."/>
            <person name="Kikuchi H."/>
            <person name="Masuho Y."/>
            <person name="Yamashita R."/>
            <person name="Nakai K."/>
            <person name="Yada T."/>
            <person name="Nakamura Y."/>
            <person name="Ohara O."/>
            <person name="Isogai T."/>
            <person name="Sugano S."/>
        </authorList>
    </citation>
    <scope>NUCLEOTIDE SEQUENCE [LARGE SCALE MRNA] (ISOFORMS 1 AND 2)</scope>
    <scope>VARIANT ALA-128</scope>
    <source>
        <tissue>Brain</tissue>
        <tissue>Small intestine</tissue>
    </source>
</reference>
<reference key="2">
    <citation type="journal article" date="2004" name="Nature">
        <title>The DNA sequence and comparative analysis of human chromosome 5.</title>
        <authorList>
            <person name="Schmutz J."/>
            <person name="Martin J."/>
            <person name="Terry A."/>
            <person name="Couronne O."/>
            <person name="Grimwood J."/>
            <person name="Lowry S."/>
            <person name="Gordon L.A."/>
            <person name="Scott D."/>
            <person name="Xie G."/>
            <person name="Huang W."/>
            <person name="Hellsten U."/>
            <person name="Tran-Gyamfi M."/>
            <person name="She X."/>
            <person name="Prabhakar S."/>
            <person name="Aerts A."/>
            <person name="Altherr M."/>
            <person name="Bajorek E."/>
            <person name="Black S."/>
            <person name="Branscomb E."/>
            <person name="Caoile C."/>
            <person name="Challacombe J.F."/>
            <person name="Chan Y.M."/>
            <person name="Denys M."/>
            <person name="Detter J.C."/>
            <person name="Escobar J."/>
            <person name="Flowers D."/>
            <person name="Fotopulos D."/>
            <person name="Glavina T."/>
            <person name="Gomez M."/>
            <person name="Gonzales E."/>
            <person name="Goodstein D."/>
            <person name="Grigoriev I."/>
            <person name="Groza M."/>
            <person name="Hammon N."/>
            <person name="Hawkins T."/>
            <person name="Haydu L."/>
            <person name="Israni S."/>
            <person name="Jett J."/>
            <person name="Kadner K."/>
            <person name="Kimball H."/>
            <person name="Kobayashi A."/>
            <person name="Lopez F."/>
            <person name="Lou Y."/>
            <person name="Martinez D."/>
            <person name="Medina C."/>
            <person name="Morgan J."/>
            <person name="Nandkeshwar R."/>
            <person name="Noonan J.P."/>
            <person name="Pitluck S."/>
            <person name="Pollard M."/>
            <person name="Predki P."/>
            <person name="Priest J."/>
            <person name="Ramirez L."/>
            <person name="Retterer J."/>
            <person name="Rodriguez A."/>
            <person name="Rogers S."/>
            <person name="Salamov A."/>
            <person name="Salazar A."/>
            <person name="Thayer N."/>
            <person name="Tice H."/>
            <person name="Tsai M."/>
            <person name="Ustaszewska A."/>
            <person name="Vo N."/>
            <person name="Wheeler J."/>
            <person name="Wu K."/>
            <person name="Yang J."/>
            <person name="Dickson M."/>
            <person name="Cheng J.-F."/>
            <person name="Eichler E.E."/>
            <person name="Olsen A."/>
            <person name="Pennacchio L.A."/>
            <person name="Rokhsar D.S."/>
            <person name="Richardson P."/>
            <person name="Lucas S.M."/>
            <person name="Myers R.M."/>
            <person name="Rubin E.M."/>
        </authorList>
    </citation>
    <scope>NUCLEOTIDE SEQUENCE [LARGE SCALE GENOMIC DNA]</scope>
</reference>
<reference key="3">
    <citation type="submission" date="2005-07" db="EMBL/GenBank/DDBJ databases">
        <authorList>
            <person name="Mural R.J."/>
            <person name="Istrail S."/>
            <person name="Sutton G.G."/>
            <person name="Florea L."/>
            <person name="Halpern A.L."/>
            <person name="Mobarry C.M."/>
            <person name="Lippert R."/>
            <person name="Walenz B."/>
            <person name="Shatkay H."/>
            <person name="Dew I."/>
            <person name="Miller J.R."/>
            <person name="Flanigan M.J."/>
            <person name="Edwards N.J."/>
            <person name="Bolanos R."/>
            <person name="Fasulo D."/>
            <person name="Halldorsson B.V."/>
            <person name="Hannenhalli S."/>
            <person name="Turner R."/>
            <person name="Yooseph S."/>
            <person name="Lu F."/>
            <person name="Nusskern D.R."/>
            <person name="Shue B.C."/>
            <person name="Zheng X.H."/>
            <person name="Zhong F."/>
            <person name="Delcher A.L."/>
            <person name="Huson D.H."/>
            <person name="Kravitz S.A."/>
            <person name="Mouchard L."/>
            <person name="Reinert K."/>
            <person name="Remington K.A."/>
            <person name="Clark A.G."/>
            <person name="Waterman M.S."/>
            <person name="Eichler E.E."/>
            <person name="Adams M.D."/>
            <person name="Hunkapiller M.W."/>
            <person name="Myers E.W."/>
            <person name="Venter J.C."/>
        </authorList>
    </citation>
    <scope>NUCLEOTIDE SEQUENCE [LARGE SCALE GENOMIC DNA]</scope>
    <scope>VARIANT ALA-128</scope>
</reference>
<reference key="4">
    <citation type="journal article" date="2004" name="Genome Res.">
        <title>The status, quality, and expansion of the NIH full-length cDNA project: the Mammalian Gene Collection (MGC).</title>
        <authorList>
            <consortium name="The MGC Project Team"/>
        </authorList>
    </citation>
    <scope>NUCLEOTIDE SEQUENCE [LARGE SCALE MRNA] (ISOFORM 1)</scope>
    <scope>VARIANT ALA-128</scope>
    <source>
        <tissue>Brain</tissue>
    </source>
</reference>
<reference key="5">
    <citation type="journal article" date="2007" name="BMC Genomics">
        <title>The full-ORF clone resource of the German cDNA consortium.</title>
        <authorList>
            <person name="Bechtel S."/>
            <person name="Rosenfelder H."/>
            <person name="Duda A."/>
            <person name="Schmidt C.P."/>
            <person name="Ernst U."/>
            <person name="Wellenreuther R."/>
            <person name="Mehrle A."/>
            <person name="Schuster C."/>
            <person name="Bahr A."/>
            <person name="Bloecker H."/>
            <person name="Heubner D."/>
            <person name="Hoerlein A."/>
            <person name="Michel G."/>
            <person name="Wedler H."/>
            <person name="Koehrer K."/>
            <person name="Ottenwaelder B."/>
            <person name="Poustka A."/>
            <person name="Wiemann S."/>
            <person name="Schupp I."/>
        </authorList>
    </citation>
    <scope>NUCLEOTIDE SEQUENCE [LARGE SCALE MRNA] OF 152-279 (ISOFORM 1)</scope>
    <source>
        <tissue>Fetal kidney</tissue>
    </source>
</reference>
<reference key="6">
    <citation type="journal article" date="2015" name="Proteomics">
        <title>N-terminome analysis of the human mitochondrial proteome.</title>
        <authorList>
            <person name="Vaca Jacome A.S."/>
            <person name="Rabilloud T."/>
            <person name="Schaeffer-Reiss C."/>
            <person name="Rompais M."/>
            <person name="Ayoub D."/>
            <person name="Lane L."/>
            <person name="Bairoch A."/>
            <person name="Van Dorsselaer A."/>
            <person name="Carapito C."/>
        </authorList>
    </citation>
    <scope>ACETYLATION [LARGE SCALE ANALYSIS] AT SER-2</scope>
    <scope>CLEAVAGE OF INITIATOR METHIONINE [LARGE SCALE ANALYSIS]</scope>
    <scope>IDENTIFICATION BY MASS SPECTROMETRY [LARGE SCALE ANALYSIS]</scope>
</reference>
<reference key="7">
    <citation type="journal article" date="2019" name="Sci. Rep.">
        <title>Human metallo-beta-lactamase enzymes degrade penicillin.</title>
        <authorList>
            <person name="Diene S.M."/>
            <person name="Pinault L."/>
            <person name="Keshri V."/>
            <person name="Armstrong N."/>
            <person name="Khelaifia S."/>
            <person name="Chabriere E."/>
            <person name="Caetano-Anolles G."/>
            <person name="Colson P."/>
            <person name="La Scola B."/>
            <person name="Rolain J.M."/>
            <person name="Pontarotti P."/>
            <person name="Raoult D."/>
        </authorList>
    </citation>
    <scope>FUNCTION</scope>
    <scope>CATALYTIC ACTIVITY</scope>
    <scope>ACTIVITY REGULATION</scope>
    <scope>BIOPHYSICOCHEMICAL PROPERTIES</scope>
</reference>
<reference key="8">
    <citation type="journal article" date="2021" name="J. Biol. Chem.">
        <title>Metallo-beta-Lactamase Domain-Containing Protein 2 (MBLAC2) is S-palmitoylated and exhibits acyl-CoA hydrolase activity.</title>
        <authorList>
            <person name="Malgapo M.I.P."/>
            <person name="Safadi J.M."/>
            <person name="Linder M.E."/>
        </authorList>
    </citation>
    <scope>FUNCTION</scope>
    <scope>CATALYTIC ACTIVITY</scope>
    <scope>SUBCELLULAR LOCATION</scope>
    <scope>PALMITOYLATION AT CYS-254</scope>
    <scope>MUTAGENESIS OF ASP-87; HIS-88; SER-89; TYR-93; CYS-176; CYS-212 AND CYS-254</scope>
</reference>
<protein>
    <recommendedName>
        <fullName>Acyl-coenzyme A thioesterase MBLAC2</fullName>
        <shortName>Acyl-CoA thioesterase MBLAC2</shortName>
        <ecNumber evidence="5">3.1.2.2</ecNumber>
    </recommendedName>
    <alternativeName>
        <fullName>Beta-lactamase MBLAC2</fullName>
        <ecNumber evidence="4">3.5.2.6</ecNumber>
    </alternativeName>
    <alternativeName>
        <fullName>Metallo-beta-lactamase domain-containing protein 2</fullName>
    </alternativeName>
    <alternativeName>
        <fullName>Palmitoyl-coenzyme A thioesterase MBLAC2</fullName>
    </alternativeName>
</protein>
<gene>
    <name type="primary">MBLAC2</name>
</gene>
<keyword id="KW-0007">Acetylation</keyword>
<keyword id="KW-0025">Alternative splicing</keyword>
<keyword id="KW-1003">Cell membrane</keyword>
<keyword id="KW-0256">Endoplasmic reticulum</keyword>
<keyword id="KW-0276">Fatty acid metabolism</keyword>
<keyword id="KW-0378">Hydrolase</keyword>
<keyword id="KW-0443">Lipid metabolism</keyword>
<keyword id="KW-0449">Lipoprotein</keyword>
<keyword id="KW-0472">Membrane</keyword>
<keyword id="KW-0479">Metal-binding</keyword>
<keyword id="KW-0564">Palmitate</keyword>
<keyword id="KW-1267">Proteomics identification</keyword>
<keyword id="KW-1185">Reference proteome</keyword>
<keyword id="KW-0862">Zinc</keyword>
<name>MBLC2_HUMAN</name>
<comment type="function">
    <text evidence="4 5">Acyl-CoA thioesterases are a group of enzymes that catalyze the hydrolysis of acyl-CoAs to the free fatty acid and coenzyme A (CoASH), providing the potential to regulate intracellular levels of acyl-CoAs, free fatty acids and CoASH (PubMed:33219126). Has an acyl-CoA thioesterase activity towards the long chain fatty acyl-CoA thioester palmitoyl-CoA (hexadecanoyl-CoA; C16:0-CoA) (PubMed:33219126). Displays a substrate preference for fatty acyl-CoAs with chain-lengths C12-C18 (PubMed:33219126). Possesses beta-lactamase activity, catalyzing the hydrolysis of penicillin G and nitrocefin (PubMed:31434986). Exhibits no activity towards other beta-lactam antibiotic classes including cephalosporins (cefotaxime) and carbapenems (imipenem) (PubMed:31434986).</text>
</comment>
<comment type="catalytic activity">
    <reaction evidence="5">
        <text>hexadecanoyl-CoA + H2O = hexadecanoate + CoA + H(+)</text>
        <dbReference type="Rhea" id="RHEA:16645"/>
        <dbReference type="ChEBI" id="CHEBI:7896"/>
        <dbReference type="ChEBI" id="CHEBI:15377"/>
        <dbReference type="ChEBI" id="CHEBI:15378"/>
        <dbReference type="ChEBI" id="CHEBI:57287"/>
        <dbReference type="ChEBI" id="CHEBI:57379"/>
        <dbReference type="EC" id="3.1.2.2"/>
    </reaction>
</comment>
<comment type="catalytic activity">
    <reaction evidence="5">
        <text>dodecanoyl-CoA + H2O = dodecanoate + CoA + H(+)</text>
        <dbReference type="Rhea" id="RHEA:30135"/>
        <dbReference type="ChEBI" id="CHEBI:15377"/>
        <dbReference type="ChEBI" id="CHEBI:15378"/>
        <dbReference type="ChEBI" id="CHEBI:18262"/>
        <dbReference type="ChEBI" id="CHEBI:57287"/>
        <dbReference type="ChEBI" id="CHEBI:57375"/>
    </reaction>
    <physiologicalReaction direction="left-to-right" evidence="9">
        <dbReference type="Rhea" id="RHEA:30136"/>
    </physiologicalReaction>
</comment>
<comment type="catalytic activity">
    <reaction evidence="5">
        <text>tetradecanoyl-CoA + H2O = tetradecanoate + CoA + H(+)</text>
        <dbReference type="Rhea" id="RHEA:40119"/>
        <dbReference type="ChEBI" id="CHEBI:15377"/>
        <dbReference type="ChEBI" id="CHEBI:15378"/>
        <dbReference type="ChEBI" id="CHEBI:30807"/>
        <dbReference type="ChEBI" id="CHEBI:57287"/>
        <dbReference type="ChEBI" id="CHEBI:57385"/>
    </reaction>
    <physiologicalReaction direction="left-to-right" evidence="9">
        <dbReference type="Rhea" id="RHEA:40120"/>
    </physiologicalReaction>
</comment>
<comment type="catalytic activity">
    <reaction evidence="5">
        <text>octadecanoyl-CoA + H2O = octadecanoate + CoA + H(+)</text>
        <dbReference type="Rhea" id="RHEA:30139"/>
        <dbReference type="ChEBI" id="CHEBI:15377"/>
        <dbReference type="ChEBI" id="CHEBI:15378"/>
        <dbReference type="ChEBI" id="CHEBI:25629"/>
        <dbReference type="ChEBI" id="CHEBI:57287"/>
        <dbReference type="ChEBI" id="CHEBI:57394"/>
    </reaction>
    <physiologicalReaction direction="left-to-right" evidence="9">
        <dbReference type="Rhea" id="RHEA:30140"/>
    </physiologicalReaction>
</comment>
<comment type="catalytic activity">
    <reaction evidence="4">
        <text>a beta-lactam + H2O = a substituted beta-amino acid</text>
        <dbReference type="Rhea" id="RHEA:20401"/>
        <dbReference type="ChEBI" id="CHEBI:15377"/>
        <dbReference type="ChEBI" id="CHEBI:35627"/>
        <dbReference type="ChEBI" id="CHEBI:140347"/>
        <dbReference type="EC" id="3.5.2.6"/>
    </reaction>
</comment>
<comment type="cofactor">
    <cofactor evidence="9">
        <name>Zn(2+)</name>
        <dbReference type="ChEBI" id="CHEBI:29105"/>
    </cofactor>
    <text evidence="9">Binds 2 Zn(2+) ions per subunit.</text>
</comment>
<comment type="activity regulation">
    <text evidence="4">Beta-lactamase activity is inhibited by sulbactam.</text>
</comment>
<comment type="biophysicochemical properties">
    <kinetics>
        <KM evidence="5">1.9 uM for palmitoyl-CoA</KM>
        <KM evidence="4">370 uM for nitrocefin</KM>
        <Vmax evidence="5">102.5 nmol/min/mg enzyme towards palmitoyl-CoA</Vmax>
    </kinetics>
</comment>
<comment type="interaction">
    <interactant intactId="EBI-21018038">
        <id>Q68D91</id>
    </interactant>
    <interactant intactId="EBI-741171">
        <id>Q96AL5</id>
        <label>PBX3</label>
    </interactant>
    <organismsDiffer>false</organismsDiffer>
    <experiments>3</experiments>
</comment>
<comment type="subcellular location">
    <subcellularLocation>
        <location evidence="5">Endoplasmic reticulum membrane</location>
        <topology evidence="5">Lipid-anchor</topology>
    </subcellularLocation>
    <subcellularLocation>
        <location evidence="5">Cell membrane</location>
        <topology evidence="5">Lipid-anchor</topology>
    </subcellularLocation>
</comment>
<comment type="alternative products">
    <event type="alternative splicing"/>
    <isoform>
        <id>Q68D91-1</id>
        <name>1</name>
        <sequence type="displayed"/>
    </isoform>
    <isoform>
        <id>Q68D91-2</id>
        <name>2</name>
        <sequence type="described" ref="VSP_032490"/>
    </isoform>
</comment>
<comment type="PTM">
    <text evidence="5">Palmitoylated on Cys-254 by ZDHHC20.</text>
</comment>
<comment type="similarity">
    <text evidence="8">Belongs to the metallo-beta-lactamase superfamily. Glyoxalase II family.</text>
</comment>
<organism>
    <name type="scientific">Homo sapiens</name>
    <name type="common">Human</name>
    <dbReference type="NCBI Taxonomy" id="9606"/>
    <lineage>
        <taxon>Eukaryota</taxon>
        <taxon>Metazoa</taxon>
        <taxon>Chordata</taxon>
        <taxon>Craniata</taxon>
        <taxon>Vertebrata</taxon>
        <taxon>Euteleostomi</taxon>
        <taxon>Mammalia</taxon>
        <taxon>Eutheria</taxon>
        <taxon>Euarchontoglires</taxon>
        <taxon>Primates</taxon>
        <taxon>Haplorrhini</taxon>
        <taxon>Catarrhini</taxon>
        <taxon>Hominidae</taxon>
        <taxon>Homo</taxon>
    </lineage>
</organism>
<evidence type="ECO:0000250" key="1"/>
<evidence type="ECO:0000269" key="2">
    <source>
    </source>
</evidence>
<evidence type="ECO:0000269" key="3">
    <source>
    </source>
</evidence>
<evidence type="ECO:0000269" key="4">
    <source>
    </source>
</evidence>
<evidence type="ECO:0000269" key="5">
    <source>
    </source>
</evidence>
<evidence type="ECO:0000269" key="6">
    <source ref="3"/>
</evidence>
<evidence type="ECO:0000303" key="7">
    <source>
    </source>
</evidence>
<evidence type="ECO:0000305" key="8"/>
<evidence type="ECO:0000305" key="9">
    <source>
    </source>
</evidence>
<evidence type="ECO:0007744" key="10">
    <source>
    </source>
</evidence>